<comment type="function">
    <text evidence="1">Single strand-specific metallo-endoribonuclease involved in late-stage 70S ribosome quality control and in maturation of the 3' terminus of the 16S rRNA.</text>
</comment>
<comment type="cofactor">
    <cofactor evidence="1">
        <name>Zn(2+)</name>
        <dbReference type="ChEBI" id="CHEBI:29105"/>
    </cofactor>
    <text evidence="1">Binds 1 zinc ion.</text>
</comment>
<comment type="subcellular location">
    <subcellularLocation>
        <location evidence="1">Cytoplasm</location>
    </subcellularLocation>
</comment>
<comment type="similarity">
    <text evidence="1">Belongs to the endoribonuclease YbeY family.</text>
</comment>
<accession>A1VXK4</accession>
<keyword id="KW-0963">Cytoplasm</keyword>
<keyword id="KW-0255">Endonuclease</keyword>
<keyword id="KW-0378">Hydrolase</keyword>
<keyword id="KW-0479">Metal-binding</keyword>
<keyword id="KW-0540">Nuclease</keyword>
<keyword id="KW-0690">Ribosome biogenesis</keyword>
<keyword id="KW-0698">rRNA processing</keyword>
<keyword id="KW-0862">Zinc</keyword>
<evidence type="ECO:0000255" key="1">
    <source>
        <dbReference type="HAMAP-Rule" id="MF_00009"/>
    </source>
</evidence>
<dbReference type="EC" id="3.1.-.-" evidence="1"/>
<dbReference type="EMBL" id="CP000538">
    <property type="protein sequence ID" value="EAQ73238.1"/>
    <property type="molecule type" value="Genomic_DNA"/>
</dbReference>
<dbReference type="RefSeq" id="WP_009881779.1">
    <property type="nucleotide sequence ID" value="NC_008787.1"/>
</dbReference>
<dbReference type="SMR" id="A1VXK4"/>
<dbReference type="KEGG" id="cjj:CJJ81176_0156"/>
<dbReference type="eggNOG" id="COG0319">
    <property type="taxonomic scope" value="Bacteria"/>
</dbReference>
<dbReference type="HOGENOM" id="CLU_106710_3_0_7"/>
<dbReference type="Proteomes" id="UP000000646">
    <property type="component" value="Chromosome"/>
</dbReference>
<dbReference type="GO" id="GO:0005737">
    <property type="term" value="C:cytoplasm"/>
    <property type="evidence" value="ECO:0007669"/>
    <property type="project" value="UniProtKB-SubCell"/>
</dbReference>
<dbReference type="GO" id="GO:0004222">
    <property type="term" value="F:metalloendopeptidase activity"/>
    <property type="evidence" value="ECO:0007669"/>
    <property type="project" value="InterPro"/>
</dbReference>
<dbReference type="GO" id="GO:0004521">
    <property type="term" value="F:RNA endonuclease activity"/>
    <property type="evidence" value="ECO:0007669"/>
    <property type="project" value="UniProtKB-UniRule"/>
</dbReference>
<dbReference type="GO" id="GO:0008270">
    <property type="term" value="F:zinc ion binding"/>
    <property type="evidence" value="ECO:0007669"/>
    <property type="project" value="UniProtKB-UniRule"/>
</dbReference>
<dbReference type="GO" id="GO:0006364">
    <property type="term" value="P:rRNA processing"/>
    <property type="evidence" value="ECO:0007669"/>
    <property type="project" value="UniProtKB-UniRule"/>
</dbReference>
<dbReference type="Gene3D" id="3.40.390.30">
    <property type="entry name" value="Metalloproteases ('zincins'), catalytic domain"/>
    <property type="match status" value="1"/>
</dbReference>
<dbReference type="HAMAP" id="MF_00009">
    <property type="entry name" value="Endoribonucl_YbeY"/>
    <property type="match status" value="1"/>
</dbReference>
<dbReference type="InterPro" id="IPR023091">
    <property type="entry name" value="MetalPrtase_cat_dom_sf_prd"/>
</dbReference>
<dbReference type="InterPro" id="IPR002036">
    <property type="entry name" value="YbeY"/>
</dbReference>
<dbReference type="InterPro" id="IPR020549">
    <property type="entry name" value="YbeY_CS"/>
</dbReference>
<dbReference type="NCBIfam" id="TIGR00043">
    <property type="entry name" value="rRNA maturation RNase YbeY"/>
    <property type="match status" value="1"/>
</dbReference>
<dbReference type="PANTHER" id="PTHR46986">
    <property type="entry name" value="ENDORIBONUCLEASE YBEY, CHLOROPLASTIC"/>
    <property type="match status" value="1"/>
</dbReference>
<dbReference type="PANTHER" id="PTHR46986:SF1">
    <property type="entry name" value="ENDORIBONUCLEASE YBEY, CHLOROPLASTIC"/>
    <property type="match status" value="1"/>
</dbReference>
<dbReference type="Pfam" id="PF02130">
    <property type="entry name" value="YbeY"/>
    <property type="match status" value="1"/>
</dbReference>
<dbReference type="SUPFAM" id="SSF55486">
    <property type="entry name" value="Metalloproteases ('zincins'), catalytic domain"/>
    <property type="match status" value="1"/>
</dbReference>
<dbReference type="PROSITE" id="PS01306">
    <property type="entry name" value="UPF0054"/>
    <property type="match status" value="1"/>
</dbReference>
<gene>
    <name evidence="1" type="primary">ybeY</name>
    <name type="ordered locus">CJJ81176_0156</name>
</gene>
<feature type="chain" id="PRO_0000284180" description="Endoribonuclease YbeY">
    <location>
        <begin position="1"/>
        <end position="134"/>
    </location>
</feature>
<feature type="binding site" evidence="1">
    <location>
        <position position="94"/>
    </location>
    <ligand>
        <name>Zn(2+)</name>
        <dbReference type="ChEBI" id="CHEBI:29105"/>
        <note>catalytic</note>
    </ligand>
</feature>
<feature type="binding site" evidence="1">
    <location>
        <position position="98"/>
    </location>
    <ligand>
        <name>Zn(2+)</name>
        <dbReference type="ChEBI" id="CHEBI:29105"/>
        <note>catalytic</note>
    </ligand>
</feature>
<feature type="binding site" evidence="1">
    <location>
        <position position="104"/>
    </location>
    <ligand>
        <name>Zn(2+)</name>
        <dbReference type="ChEBI" id="CHEBI:29105"/>
        <note>catalytic</note>
    </ligand>
</feature>
<protein>
    <recommendedName>
        <fullName evidence="1">Endoribonuclease YbeY</fullName>
        <ecNumber evidence="1">3.1.-.-</ecNumber>
    </recommendedName>
</protein>
<sequence>MILSDEKCDFLESIASFLGPKDVELVFVDSKEMQEINLEQRKQDKTTDVLSFPLENIDESLPLGSVVINVDLAKEKAKELGHSYEEEISLLFIHAMLHLLGFDHENDNGEMREKEKELIEYFNLPKSLIVRTLG</sequence>
<name>YBEY_CAMJJ</name>
<reference key="1">
    <citation type="submission" date="2006-12" db="EMBL/GenBank/DDBJ databases">
        <authorList>
            <person name="Fouts D.E."/>
            <person name="Nelson K.E."/>
            <person name="Sebastian Y."/>
        </authorList>
    </citation>
    <scope>NUCLEOTIDE SEQUENCE [LARGE SCALE GENOMIC DNA]</scope>
    <source>
        <strain>81-176</strain>
    </source>
</reference>
<organism>
    <name type="scientific">Campylobacter jejuni subsp. jejuni serotype O:23/36 (strain 81-176)</name>
    <dbReference type="NCBI Taxonomy" id="354242"/>
    <lineage>
        <taxon>Bacteria</taxon>
        <taxon>Pseudomonadati</taxon>
        <taxon>Campylobacterota</taxon>
        <taxon>Epsilonproteobacteria</taxon>
        <taxon>Campylobacterales</taxon>
        <taxon>Campylobacteraceae</taxon>
        <taxon>Campylobacter</taxon>
    </lineage>
</organism>
<proteinExistence type="inferred from homology"/>